<sequence length="727" mass="80963">MTVSENSVLETEVLVGGSAMPNERPGAMEPQSLSQMPEGFPRRSTVANGVRSKVSRRFFVVGGALALSAFAIYEMGAVFSIGGITPLEYLMLALFAINFCWIALAFCSGIAGFFMLLKKPKPNELEQTELHTRTAILMPTYNESPDRVFSAVSVMAEALSQTGHGHAFDWFILSDTTDPEIALLEEQAFLVLRQETHKHSRVYYRRRRKNVARKAGNVADFCRRWGSRYDHLLVLDADSLMESSTITGLAQRMQADPDAGLIQTIPSLINGTTLMARLQQFAARIYGPVIGTGLGWWVQKEGNFWGHNAIIRTEAFMGAAGLPNLKGKPPFGGHILSHDFVEAALIRRAGWSVVIAYDLPGSYEECPPSIVDLAVRDRRWCQGNLQHSRILPTKGLHWVSRLHLMTGIMAYLSSPFWLLLILTGLMLALQAHFIRPEYFTDQFSLFPTWPIMDSDRALRLFYITMGVLFGPKIFGVLLLLKDGNFARSVGGRIKAILSVIFEVILSALIAPIMMFIHCGAVMSILMGRDSGWSPQRRDDGSMPWLTLIYRHRWHMLAGVMLGYAAILDSLTLLAWMSPALIGLWLAVPISAWTGSIKIGEFFKRIGILATPEERNPAPICIRAQEARAAYQAHIEQPWTLAQVLKDPALMELHLAMVDKQPLRAAGTPIEPVEAIVHVKVHEAQCQQSALALFNRQEMALVLANPLMLRSLQKLPEQFVPEDLVSFC</sequence>
<proteinExistence type="inferred from homology"/>
<reference key="1">
    <citation type="submission" date="2006-09" db="EMBL/GenBank/DDBJ databases">
        <title>Complete sequence of chromosome 1 of Shewanella sp. ANA-3.</title>
        <authorList>
            <person name="Copeland A."/>
            <person name="Lucas S."/>
            <person name="Lapidus A."/>
            <person name="Barry K."/>
            <person name="Detter J.C."/>
            <person name="Glavina del Rio T."/>
            <person name="Hammon N."/>
            <person name="Israni S."/>
            <person name="Dalin E."/>
            <person name="Tice H."/>
            <person name="Pitluck S."/>
            <person name="Chertkov O."/>
            <person name="Brettin T."/>
            <person name="Bruce D."/>
            <person name="Han C."/>
            <person name="Tapia R."/>
            <person name="Gilna P."/>
            <person name="Schmutz J."/>
            <person name="Larimer F."/>
            <person name="Land M."/>
            <person name="Hauser L."/>
            <person name="Kyrpides N."/>
            <person name="Kim E."/>
            <person name="Newman D."/>
            <person name="Salticov C."/>
            <person name="Konstantinidis K."/>
            <person name="Klappenback J."/>
            <person name="Tiedje J."/>
            <person name="Richardson P."/>
        </authorList>
    </citation>
    <scope>NUCLEOTIDE SEQUENCE [LARGE SCALE GENOMIC DNA]</scope>
    <source>
        <strain>ANA-3</strain>
    </source>
</reference>
<comment type="function">
    <text evidence="1">Involved in the biosynthesis of osmoregulated periplasmic glucans (OPGs).</text>
</comment>
<comment type="pathway">
    <text evidence="1">Glycan metabolism; osmoregulated periplasmic glucan (OPG) biosynthesis.</text>
</comment>
<comment type="subcellular location">
    <subcellularLocation>
        <location evidence="1">Cell inner membrane</location>
        <topology evidence="1">Multi-pass membrane protein</topology>
    </subcellularLocation>
</comment>
<comment type="similarity">
    <text evidence="1">Belongs to the glycosyltransferase 2 family. OpgH subfamily.</text>
</comment>
<protein>
    <recommendedName>
        <fullName evidence="1">Glucans biosynthesis glucosyltransferase H</fullName>
        <ecNumber evidence="1">2.4.1.-</ecNumber>
    </recommendedName>
</protein>
<feature type="chain" id="PRO_1000064616" description="Glucans biosynthesis glucosyltransferase H">
    <location>
        <begin position="1"/>
        <end position="727"/>
    </location>
</feature>
<feature type="transmembrane region" description="Helical" evidence="1">
    <location>
        <begin position="58"/>
        <end position="78"/>
    </location>
</feature>
<feature type="transmembrane region" description="Helical" evidence="1">
    <location>
        <begin position="94"/>
        <end position="114"/>
    </location>
</feature>
<feature type="transmembrane region" description="Helical" evidence="1">
    <location>
        <begin position="278"/>
        <end position="298"/>
    </location>
</feature>
<feature type="transmembrane region" description="Helical" evidence="1">
    <location>
        <begin position="408"/>
        <end position="428"/>
    </location>
</feature>
<feature type="transmembrane region" description="Helical" evidence="1">
    <location>
        <begin position="460"/>
        <end position="480"/>
    </location>
</feature>
<feature type="transmembrane region" description="Helical" evidence="1">
    <location>
        <begin position="496"/>
        <end position="516"/>
    </location>
</feature>
<feature type="transmembrane region" description="Helical" evidence="1">
    <location>
        <begin position="572"/>
        <end position="592"/>
    </location>
</feature>
<feature type="region of interest" description="Disordered" evidence="2">
    <location>
        <begin position="18"/>
        <end position="43"/>
    </location>
</feature>
<keyword id="KW-0997">Cell inner membrane</keyword>
<keyword id="KW-1003">Cell membrane</keyword>
<keyword id="KW-0328">Glycosyltransferase</keyword>
<keyword id="KW-0472">Membrane</keyword>
<keyword id="KW-0808">Transferase</keyword>
<keyword id="KW-0812">Transmembrane</keyword>
<keyword id="KW-1133">Transmembrane helix</keyword>
<name>OPGH_SHESA</name>
<evidence type="ECO:0000255" key="1">
    <source>
        <dbReference type="HAMAP-Rule" id="MF_01072"/>
    </source>
</evidence>
<evidence type="ECO:0000256" key="2">
    <source>
        <dbReference type="SAM" id="MobiDB-lite"/>
    </source>
</evidence>
<dbReference type="EC" id="2.4.1.-" evidence="1"/>
<dbReference type="EMBL" id="CP000469">
    <property type="protein sequence ID" value="ABK48119.1"/>
    <property type="molecule type" value="Genomic_DNA"/>
</dbReference>
<dbReference type="STRING" id="94122.Shewana3_1888"/>
<dbReference type="CAZy" id="GT2">
    <property type="family name" value="Glycosyltransferase Family 2"/>
</dbReference>
<dbReference type="KEGG" id="shn:Shewana3_1888"/>
<dbReference type="eggNOG" id="COG2943">
    <property type="taxonomic scope" value="Bacteria"/>
</dbReference>
<dbReference type="HOGENOM" id="CLU_015730_1_0_6"/>
<dbReference type="OrthoDB" id="9775281at2"/>
<dbReference type="UniPathway" id="UPA00637"/>
<dbReference type="Proteomes" id="UP000002589">
    <property type="component" value="Chromosome"/>
</dbReference>
<dbReference type="GO" id="GO:0005886">
    <property type="term" value="C:plasma membrane"/>
    <property type="evidence" value="ECO:0007669"/>
    <property type="project" value="UniProtKB-SubCell"/>
</dbReference>
<dbReference type="GO" id="GO:0016758">
    <property type="term" value="F:hexosyltransferase activity"/>
    <property type="evidence" value="ECO:0007669"/>
    <property type="project" value="UniProtKB-UniRule"/>
</dbReference>
<dbReference type="GO" id="GO:0009250">
    <property type="term" value="P:glucan biosynthetic process"/>
    <property type="evidence" value="ECO:0007669"/>
    <property type="project" value="UniProtKB-UniRule"/>
</dbReference>
<dbReference type="CDD" id="cd04191">
    <property type="entry name" value="Glucan_BSP_MdoH"/>
    <property type="match status" value="1"/>
</dbReference>
<dbReference type="FunFam" id="3.90.550.10:FF:000047">
    <property type="entry name" value="Glucans biosynthesis glucosyltransferase H"/>
    <property type="match status" value="1"/>
</dbReference>
<dbReference type="Gene3D" id="3.90.550.10">
    <property type="entry name" value="Spore Coat Polysaccharide Biosynthesis Protein SpsA, Chain A"/>
    <property type="match status" value="1"/>
</dbReference>
<dbReference type="HAMAP" id="MF_01072">
    <property type="entry name" value="MdoH_OpgH"/>
    <property type="match status" value="1"/>
</dbReference>
<dbReference type="InterPro" id="IPR023725">
    <property type="entry name" value="Glucans_biosynth_gluTrFase_H"/>
</dbReference>
<dbReference type="InterPro" id="IPR001173">
    <property type="entry name" value="Glyco_trans_2-like"/>
</dbReference>
<dbReference type="InterPro" id="IPR050321">
    <property type="entry name" value="Glycosyltr_2/OpgH_subfam"/>
</dbReference>
<dbReference type="InterPro" id="IPR029044">
    <property type="entry name" value="Nucleotide-diphossugar_trans"/>
</dbReference>
<dbReference type="NCBIfam" id="NF003956">
    <property type="entry name" value="PRK05454.1-3"/>
    <property type="match status" value="1"/>
</dbReference>
<dbReference type="NCBIfam" id="NF003958">
    <property type="entry name" value="PRK05454.2-1"/>
    <property type="match status" value="1"/>
</dbReference>
<dbReference type="NCBIfam" id="NF003962">
    <property type="entry name" value="PRK05454.2-5"/>
    <property type="match status" value="1"/>
</dbReference>
<dbReference type="PANTHER" id="PTHR43867">
    <property type="entry name" value="CELLULOSE SYNTHASE CATALYTIC SUBUNIT A [UDP-FORMING]"/>
    <property type="match status" value="1"/>
</dbReference>
<dbReference type="PANTHER" id="PTHR43867:SF5">
    <property type="entry name" value="GLUCANS BIOSYNTHESIS GLUCOSYLTRANSFERASE H"/>
    <property type="match status" value="1"/>
</dbReference>
<dbReference type="Pfam" id="PF13632">
    <property type="entry name" value="Glyco_trans_2_3"/>
    <property type="match status" value="1"/>
</dbReference>
<dbReference type="SUPFAM" id="SSF53448">
    <property type="entry name" value="Nucleotide-diphospho-sugar transferases"/>
    <property type="match status" value="1"/>
</dbReference>
<gene>
    <name evidence="1" type="primary">opgH</name>
    <name type="ordered locus">Shewana3_1888</name>
</gene>
<organism>
    <name type="scientific">Shewanella sp. (strain ANA-3)</name>
    <dbReference type="NCBI Taxonomy" id="94122"/>
    <lineage>
        <taxon>Bacteria</taxon>
        <taxon>Pseudomonadati</taxon>
        <taxon>Pseudomonadota</taxon>
        <taxon>Gammaproteobacteria</taxon>
        <taxon>Alteromonadales</taxon>
        <taxon>Shewanellaceae</taxon>
        <taxon>Shewanella</taxon>
    </lineage>
</organism>
<accession>A0KWF0</accession>